<gene>
    <name type="primary">MSTN</name>
    <name type="synonym">GDF8</name>
</gene>
<dbReference type="EMBL" id="AY629306">
    <property type="protein sequence ID" value="AAT40570.1"/>
    <property type="molecule type" value="mRNA"/>
</dbReference>
<dbReference type="SMR" id="Q5USV8"/>
<dbReference type="GlyCosmos" id="Q5USV8">
    <property type="glycosylation" value="2 sites, No reported glycans"/>
</dbReference>
<dbReference type="GO" id="GO:0005615">
    <property type="term" value="C:extracellular space"/>
    <property type="evidence" value="ECO:0007669"/>
    <property type="project" value="UniProtKB-KW"/>
</dbReference>
<dbReference type="GO" id="GO:0005125">
    <property type="term" value="F:cytokine activity"/>
    <property type="evidence" value="ECO:0007669"/>
    <property type="project" value="UniProtKB-KW"/>
</dbReference>
<dbReference type="GO" id="GO:0008083">
    <property type="term" value="F:growth factor activity"/>
    <property type="evidence" value="ECO:0007669"/>
    <property type="project" value="UniProtKB-KW"/>
</dbReference>
<dbReference type="GO" id="GO:0008201">
    <property type="term" value="F:heparin binding"/>
    <property type="evidence" value="ECO:0007669"/>
    <property type="project" value="UniProtKB-KW"/>
</dbReference>
<dbReference type="GO" id="GO:0042802">
    <property type="term" value="F:identical protein binding"/>
    <property type="evidence" value="ECO:0000250"/>
    <property type="project" value="UniProtKB"/>
</dbReference>
<dbReference type="GO" id="GO:0014839">
    <property type="term" value="P:myoblast migration involved in skeletal muscle regeneration"/>
    <property type="evidence" value="ECO:0000250"/>
    <property type="project" value="UniProtKB"/>
</dbReference>
<dbReference type="GO" id="GO:0010592">
    <property type="term" value="P:positive regulation of lamellipodium assembly"/>
    <property type="evidence" value="ECO:0000250"/>
    <property type="project" value="UniProtKB"/>
</dbReference>
<dbReference type="GO" id="GO:0010759">
    <property type="term" value="P:positive regulation of macrophage chemotaxis"/>
    <property type="evidence" value="ECO:0000250"/>
    <property type="project" value="UniProtKB"/>
</dbReference>
<dbReference type="CDD" id="cd19388">
    <property type="entry name" value="TGF_beta_GDF8"/>
    <property type="match status" value="1"/>
</dbReference>
<dbReference type="FunFam" id="2.60.120.970:FF:000001">
    <property type="entry name" value="Growth/differentiation factor 8"/>
    <property type="match status" value="1"/>
</dbReference>
<dbReference type="FunFam" id="2.10.90.10:FF:000006">
    <property type="entry name" value="growth/differentiation factor 8"/>
    <property type="match status" value="1"/>
</dbReference>
<dbReference type="Gene3D" id="2.60.120.970">
    <property type="match status" value="1"/>
</dbReference>
<dbReference type="Gene3D" id="2.10.90.10">
    <property type="entry name" value="Cystine-knot cytokines"/>
    <property type="match status" value="1"/>
</dbReference>
<dbReference type="InterPro" id="IPR029034">
    <property type="entry name" value="Cystine-knot_cytokine"/>
</dbReference>
<dbReference type="InterPro" id="IPR001839">
    <property type="entry name" value="TGF-b_C"/>
</dbReference>
<dbReference type="InterPro" id="IPR001111">
    <property type="entry name" value="TGF-b_propeptide"/>
</dbReference>
<dbReference type="InterPro" id="IPR015615">
    <property type="entry name" value="TGF-beta-rel"/>
</dbReference>
<dbReference type="InterPro" id="IPR017948">
    <property type="entry name" value="TGFb_CS"/>
</dbReference>
<dbReference type="PANTHER" id="PTHR11848:SF150">
    <property type="entry name" value="GROWTH_DIFFERENTIATION FACTOR 8"/>
    <property type="match status" value="1"/>
</dbReference>
<dbReference type="PANTHER" id="PTHR11848">
    <property type="entry name" value="TGF-BETA FAMILY"/>
    <property type="match status" value="1"/>
</dbReference>
<dbReference type="Pfam" id="PF00019">
    <property type="entry name" value="TGF_beta"/>
    <property type="match status" value="1"/>
</dbReference>
<dbReference type="Pfam" id="PF00688">
    <property type="entry name" value="TGFb_propeptide"/>
    <property type="match status" value="1"/>
</dbReference>
<dbReference type="SMART" id="SM00204">
    <property type="entry name" value="TGFB"/>
    <property type="match status" value="1"/>
</dbReference>
<dbReference type="SUPFAM" id="SSF57501">
    <property type="entry name" value="Cystine-knot cytokines"/>
    <property type="match status" value="1"/>
</dbReference>
<dbReference type="PROSITE" id="PS00250">
    <property type="entry name" value="TGF_BETA_1"/>
    <property type="match status" value="1"/>
</dbReference>
<dbReference type="PROSITE" id="PS51362">
    <property type="entry name" value="TGF_BETA_2"/>
    <property type="match status" value="1"/>
</dbReference>
<accession>Q5USV8</accession>
<keyword id="KW-0165">Cleavage on pair of basic residues</keyword>
<keyword id="KW-0202">Cytokine</keyword>
<keyword id="KW-1015">Disulfide bond</keyword>
<keyword id="KW-0325">Glycoprotein</keyword>
<keyword id="KW-0339">Growth factor</keyword>
<keyword id="KW-0358">Heparin-binding</keyword>
<keyword id="KW-0964">Secreted</keyword>
<keyword id="KW-0732">Signal</keyword>
<evidence type="ECO:0000250" key="1">
    <source>
        <dbReference type="UniProtKB" id="O08689"/>
    </source>
</evidence>
<evidence type="ECO:0000250" key="2">
    <source>
        <dbReference type="UniProtKB" id="O14793"/>
    </source>
</evidence>
<evidence type="ECO:0000255" key="3"/>
<evidence type="ECO:0000305" key="4"/>
<name>GDF8_HEMJE</name>
<feature type="signal peptide" evidence="3">
    <location>
        <begin position="1"/>
        <end position="18"/>
    </location>
</feature>
<feature type="propeptide" id="PRO_0000033946" evidence="3">
    <location>
        <begin position="19"/>
        <end position="266"/>
    </location>
</feature>
<feature type="chain" id="PRO_0000033947" description="Growth/differentiation factor 8">
    <location>
        <begin position="267"/>
        <end position="375"/>
    </location>
</feature>
<feature type="site" description="Cleavage" evidence="1">
    <location>
        <begin position="98"/>
        <end position="99"/>
    </location>
</feature>
<feature type="glycosylation site" description="N-linked (GlcNAc...) asparagine" evidence="3">
    <location>
        <position position="48"/>
    </location>
</feature>
<feature type="glycosylation site" description="N-linked (GlcNAc...) asparagine" evidence="3">
    <location>
        <position position="71"/>
    </location>
</feature>
<feature type="disulfide bond" evidence="2">
    <location>
        <begin position="272"/>
        <end position="282"/>
    </location>
</feature>
<feature type="disulfide bond" evidence="2">
    <location>
        <begin position="281"/>
        <end position="340"/>
    </location>
</feature>
<feature type="disulfide bond" evidence="2">
    <location>
        <begin position="309"/>
        <end position="372"/>
    </location>
</feature>
<feature type="disulfide bond" evidence="2">
    <location>
        <begin position="313"/>
        <end position="374"/>
    </location>
</feature>
<feature type="disulfide bond" description="Interchain" evidence="2">
    <location>
        <position position="339"/>
    </location>
</feature>
<comment type="function">
    <text evidence="1">Acts specifically as a negative regulator of skeletal muscle growth.</text>
</comment>
<comment type="subunit">
    <text evidence="1">Homodimer; disulfide-linked. Interacts with WFIKKN2, leading to inhibit its activity. Interacts with FSTL3.</text>
</comment>
<comment type="subcellular location">
    <subcellularLocation>
        <location evidence="1">Secreted</location>
    </subcellularLocation>
</comment>
<comment type="PTM">
    <text evidence="1">Synthesized as large precursor molecule that undergoes proteolytic cleavage to generate an N-terminal propeptide and a disulfide linked C-terminal dimer, which is the biologically active molecule. The circulating form consists of a latent complex of the C-terminal dimer and other proteins, including its propeptide, which maintain the C-terminal dimer in a latent, inactive state. Ligand activation requires additional cleavage of the prodomain by a tolloid-like metalloproteinase.</text>
</comment>
<comment type="similarity">
    <text evidence="4">Belongs to the TGF-beta family.</text>
</comment>
<sequence>MQKLQIFVYIYLFMLLVAGPVDLNENSEQKENVEKKGLCNACLWRQNNKSSRLEAIKIQILSKLRLETAPNISKDAIRQLLPKAPPLRELIDQYDVQRDDSSDGSLEDDDYHVTTETVITMPTESDLLAEVQEKPKCCFFKFSSKIQHNKVVKAQLWIYLRPVKTPTTVFVQILRLIKPMKDGTRYTGIRSLKLDMNPGTGIWQSIDVKTVLQNWLKQPESNLGIEIKALDENGHDLAVTFPEPGEEGLNPFLEVKVTDTPKRSRRDFGLDCDEHSTESRCCRYPLTVDFEAFGWDWIIAPKRYKANYCSGECEFLFLQKYPHTHLVHQANPKGSAGPCCTPTKMSPINMLYFNGKEQIIYGKIPGMVVDRCGCS</sequence>
<organism>
    <name type="scientific">Hemitragus jemlahicus</name>
    <name type="common">Himalayan tahr</name>
    <dbReference type="NCBI Taxonomy" id="37179"/>
    <lineage>
        <taxon>Eukaryota</taxon>
        <taxon>Metazoa</taxon>
        <taxon>Chordata</taxon>
        <taxon>Craniata</taxon>
        <taxon>Vertebrata</taxon>
        <taxon>Euteleostomi</taxon>
        <taxon>Mammalia</taxon>
        <taxon>Eutheria</taxon>
        <taxon>Laurasiatheria</taxon>
        <taxon>Artiodactyla</taxon>
        <taxon>Ruminantia</taxon>
        <taxon>Pecora</taxon>
        <taxon>Bovidae</taxon>
        <taxon>Caprinae</taxon>
        <taxon>Hemitragus</taxon>
    </lineage>
</organism>
<proteinExistence type="evidence at transcript level"/>
<reference key="1">
    <citation type="journal article" date="2004" name="Mol. Phylogenet. Evol.">
        <title>Myostatin rapid sequence evolution in ruminants predates domestication.</title>
        <authorList>
            <person name="Tellgren S."/>
            <person name="Berglund A.C."/>
            <person name="Savolainen P."/>
            <person name="Janis C.M."/>
            <person name="Liberles D.A."/>
        </authorList>
    </citation>
    <scope>NUCLEOTIDE SEQUENCE [MRNA]</scope>
</reference>
<protein>
    <recommendedName>
        <fullName>Growth/differentiation factor 8</fullName>
        <shortName>GDF-8</shortName>
    </recommendedName>
    <alternativeName>
        <fullName>Myostatin</fullName>
    </alternativeName>
</protein>